<sequence>MSSQKKKISLFAFFLLTVITITLKTYFSYYVDFSLGVKGLVQNLILLMNPYSLVALVLSVFLFFKGKKAFWFMFIGGFLLTFLLYANVVYFRFFSDFLTFSTLNQVGNVESMGGAVSASFKWYDFVYFIDTLVYLFILIFKTKWLDTKAFSKKFVPVVMAASVALFFLNLAFAETDRPELLTRTFDHKYLVKYLGPYNFTVYDGVKTIENNQQKALASEDDLTKVLNYTKQRQTEPNPEYYGVAKKKNIIKIHLESFQTFLINKKVNGKEVTPFLNKLSSGKEQFTYFPNFFHQTGQGKTSDSEFTMDNSLYGLPQGSAFSLKGDNTYQSLPAILDQKQGYKSDVMHGDYKTFWNRDQVYKHFGIDKFYDATYYDMSDKNVVNLGLKDKIFFKDSANYQAKMKSPFYSHLITLTNHYPFTLDEKDATIEKSNTGDATVDGYIQTARYLDEALEEYINDLKKKGLYDNSVIMIYGDHYGISENHNNAMEKLLGEKITPAKFTDLNRTGFWIKIPGKSGGINNEYAGQVDVMPTILHLAGIDTKNYLMFGTDLFSKGHNQVVPFRNGDFITKDYKYVNGKIYSNKNNELITTQPADFEKNKKQVEKDLEMSDNVLNGDLFRFYKNPDFKKVNPSKYKYETGPKANSKK</sequence>
<comment type="function">
    <text evidence="1">Catalyzes the polymerization of lipoteichoic acid (LTA) polyglycerol phosphate, a reaction that presumably uses phosphatidylglycerol (PG) as substrate. Is required for staphylococcal growth and cell division process (By similarity).</text>
</comment>
<comment type="pathway">
    <text>Cell wall biogenesis; lipoteichoic acid biosynthesis.</text>
</comment>
<comment type="subcellular location">
    <subcellularLocation>
        <location evidence="4">Cell membrane</location>
        <topology evidence="4">Multi-pass membrane protein</topology>
    </subcellularLocation>
</comment>
<comment type="subcellular location">
    <molecule>Processed glycerol phosphate lipoteichoic acid synthase</molecule>
    <subcellularLocation>
        <location evidence="1">Secreted</location>
    </subcellularLocation>
</comment>
<comment type="PTM">
    <text evidence="1">Proteolytically cleaved.</text>
</comment>
<comment type="similarity">
    <text evidence="4">Belongs to the LTA synthase family.</text>
</comment>
<gene>
    <name type="primary">ltaS</name>
    <name type="ordered locus">SAUSA300_0703</name>
</gene>
<dbReference type="EC" id="2.7.8.-"/>
<dbReference type="EMBL" id="CP000255">
    <property type="protein sequence ID" value="ABD21737.1"/>
    <property type="molecule type" value="Genomic_DNA"/>
</dbReference>
<dbReference type="RefSeq" id="WP_000098285.1">
    <property type="nucleotide sequence ID" value="NZ_CP027476.1"/>
</dbReference>
<dbReference type="SMR" id="Q2FIS2"/>
<dbReference type="KEGG" id="saa:SAUSA300_0703"/>
<dbReference type="HOGENOM" id="CLU_021310_0_0_9"/>
<dbReference type="OMA" id="DGIWGIW"/>
<dbReference type="UniPathway" id="UPA00556"/>
<dbReference type="Proteomes" id="UP000001939">
    <property type="component" value="Chromosome"/>
</dbReference>
<dbReference type="GO" id="GO:0005576">
    <property type="term" value="C:extracellular region"/>
    <property type="evidence" value="ECO:0007669"/>
    <property type="project" value="UniProtKB-SubCell"/>
</dbReference>
<dbReference type="GO" id="GO:0005886">
    <property type="term" value="C:plasma membrane"/>
    <property type="evidence" value="ECO:0007669"/>
    <property type="project" value="UniProtKB-SubCell"/>
</dbReference>
<dbReference type="GO" id="GO:0046872">
    <property type="term" value="F:metal ion binding"/>
    <property type="evidence" value="ECO:0007669"/>
    <property type="project" value="UniProtKB-KW"/>
</dbReference>
<dbReference type="GO" id="GO:0016740">
    <property type="term" value="F:transferase activity"/>
    <property type="evidence" value="ECO:0007669"/>
    <property type="project" value="UniProtKB-KW"/>
</dbReference>
<dbReference type="GO" id="GO:0071555">
    <property type="term" value="P:cell wall organization"/>
    <property type="evidence" value="ECO:0007669"/>
    <property type="project" value="UniProtKB-KW"/>
</dbReference>
<dbReference type="GO" id="GO:0070395">
    <property type="term" value="P:lipoteichoic acid biosynthetic process"/>
    <property type="evidence" value="ECO:0007669"/>
    <property type="project" value="UniProtKB-UniPathway"/>
</dbReference>
<dbReference type="CDD" id="cd16015">
    <property type="entry name" value="LTA_synthase"/>
    <property type="match status" value="1"/>
</dbReference>
<dbReference type="Gene3D" id="3.30.1120.170">
    <property type="match status" value="1"/>
</dbReference>
<dbReference type="Gene3D" id="3.40.720.10">
    <property type="entry name" value="Alkaline Phosphatase, subunit A"/>
    <property type="match status" value="1"/>
</dbReference>
<dbReference type="InterPro" id="IPR017850">
    <property type="entry name" value="Alkaline_phosphatase_core_sf"/>
</dbReference>
<dbReference type="InterPro" id="IPR012160">
    <property type="entry name" value="LtaS-like"/>
</dbReference>
<dbReference type="InterPro" id="IPR050448">
    <property type="entry name" value="OpgB/LTA_synthase_biosynth"/>
</dbReference>
<dbReference type="InterPro" id="IPR000917">
    <property type="entry name" value="Sulfatase_N"/>
</dbReference>
<dbReference type="PANTHER" id="PTHR47371">
    <property type="entry name" value="LIPOTEICHOIC ACID SYNTHASE"/>
    <property type="match status" value="1"/>
</dbReference>
<dbReference type="PANTHER" id="PTHR47371:SF3">
    <property type="entry name" value="PHOSPHOGLYCEROL TRANSFERASE I"/>
    <property type="match status" value="1"/>
</dbReference>
<dbReference type="Pfam" id="PF00884">
    <property type="entry name" value="Sulfatase"/>
    <property type="match status" value="1"/>
</dbReference>
<dbReference type="PIRSF" id="PIRSF005091">
    <property type="entry name" value="Mmb_sulf_HI1246"/>
    <property type="match status" value="1"/>
</dbReference>
<dbReference type="SUPFAM" id="SSF53649">
    <property type="entry name" value="Alkaline phosphatase-like"/>
    <property type="match status" value="1"/>
</dbReference>
<proteinExistence type="inferred from homology"/>
<reference key="1">
    <citation type="journal article" date="2006" name="Lancet">
        <title>Complete genome sequence of USA300, an epidemic clone of community-acquired meticillin-resistant Staphylococcus aureus.</title>
        <authorList>
            <person name="Diep B.A."/>
            <person name="Gill S.R."/>
            <person name="Chang R.F."/>
            <person name="Phan T.H."/>
            <person name="Chen J.H."/>
            <person name="Davidson M.G."/>
            <person name="Lin F."/>
            <person name="Lin J."/>
            <person name="Carleton H.A."/>
            <person name="Mongodin E.F."/>
            <person name="Sensabaugh G.F."/>
            <person name="Perdreau-Remington F."/>
        </authorList>
    </citation>
    <scope>NUCLEOTIDE SEQUENCE [LARGE SCALE GENOMIC DNA]</scope>
    <source>
        <strain>USA300</strain>
    </source>
</reference>
<name>LTAS_STAA3</name>
<organism>
    <name type="scientific">Staphylococcus aureus (strain USA300)</name>
    <dbReference type="NCBI Taxonomy" id="367830"/>
    <lineage>
        <taxon>Bacteria</taxon>
        <taxon>Bacillati</taxon>
        <taxon>Bacillota</taxon>
        <taxon>Bacilli</taxon>
        <taxon>Bacillales</taxon>
        <taxon>Staphylococcaceae</taxon>
        <taxon>Staphylococcus</taxon>
    </lineage>
</organism>
<accession>Q2FIS2</accession>
<protein>
    <recommendedName>
        <fullName>Lipoteichoic acid synthase</fullName>
    </recommendedName>
    <component>
        <recommendedName>
            <fullName>Glycerol phosphate lipoteichoic acid synthase</fullName>
            <shortName>LTA synthase</shortName>
            <ecNumber>2.7.8.-</ecNumber>
        </recommendedName>
        <alternativeName>
            <fullName>Polyglycerol phosphate synthase</fullName>
        </alternativeName>
    </component>
    <component>
        <recommendedName>
            <fullName>Processed glycerol phosphate lipoteichoic acid synthase</fullName>
        </recommendedName>
    </component>
</protein>
<keyword id="KW-1003">Cell membrane</keyword>
<keyword id="KW-0961">Cell wall biogenesis/degradation</keyword>
<keyword id="KW-0464">Manganese</keyword>
<keyword id="KW-0472">Membrane</keyword>
<keyword id="KW-0479">Metal-binding</keyword>
<keyword id="KW-0964">Secreted</keyword>
<keyword id="KW-0808">Transferase</keyword>
<keyword id="KW-0812">Transmembrane</keyword>
<keyword id="KW-1133">Transmembrane helix</keyword>
<feature type="chain" id="PRO_0000305366" description="Glycerol phosphate lipoteichoic acid synthase">
    <location>
        <begin position="1"/>
        <end position="217"/>
    </location>
</feature>
<feature type="chain" id="PRO_0000305367" description="Processed glycerol phosphate lipoteichoic acid synthase">
    <location>
        <begin position="218"/>
        <end position="646"/>
    </location>
</feature>
<feature type="topological domain" description="Cytoplasmic" evidence="2">
    <location>
        <begin position="1"/>
        <end position="7"/>
    </location>
</feature>
<feature type="transmembrane region" description="Helical" evidence="2">
    <location>
        <begin position="8"/>
        <end position="28"/>
    </location>
</feature>
<feature type="topological domain" description="Extracellular" evidence="2">
    <location>
        <begin position="29"/>
        <end position="43"/>
    </location>
</feature>
<feature type="transmembrane region" description="Helical" evidence="2">
    <location>
        <begin position="44"/>
        <end position="64"/>
    </location>
</feature>
<feature type="topological domain" description="Cytoplasmic" evidence="2">
    <location>
        <begin position="65"/>
        <end position="68"/>
    </location>
</feature>
<feature type="transmembrane region" description="Helical" evidence="2">
    <location>
        <begin position="69"/>
        <end position="89"/>
    </location>
</feature>
<feature type="topological domain" description="Extracellular" evidence="2">
    <location>
        <begin position="90"/>
        <end position="119"/>
    </location>
</feature>
<feature type="transmembrane region" description="Helical" evidence="2">
    <location>
        <begin position="120"/>
        <end position="140"/>
    </location>
</feature>
<feature type="topological domain" description="Cytoplasmic" evidence="2">
    <location>
        <begin position="141"/>
        <end position="153"/>
    </location>
</feature>
<feature type="transmembrane region" description="Helical" evidence="2">
    <location>
        <begin position="154"/>
        <end position="174"/>
    </location>
</feature>
<feature type="topological domain" description="Extracellular" evidence="2">
    <location>
        <begin position="175"/>
        <end position="646"/>
    </location>
</feature>
<feature type="region of interest" description="Disordered" evidence="3">
    <location>
        <begin position="623"/>
        <end position="646"/>
    </location>
</feature>
<feature type="compositionally biased region" description="Basic and acidic residues" evidence="3">
    <location>
        <begin position="623"/>
        <end position="638"/>
    </location>
</feature>
<feature type="active site" evidence="1">
    <location>
        <position position="300"/>
    </location>
</feature>
<feature type="binding site" evidence="1">
    <location>
        <position position="255"/>
    </location>
    <ligand>
        <name>Mn(2+)</name>
        <dbReference type="ChEBI" id="CHEBI:29035"/>
    </ligand>
</feature>
<feature type="binding site" evidence="1">
    <location>
        <position position="300"/>
    </location>
    <ligand>
        <name>Mn(2+)</name>
        <dbReference type="ChEBI" id="CHEBI:29035"/>
    </ligand>
</feature>
<feature type="binding site" evidence="1">
    <location>
        <position position="416"/>
    </location>
    <ligand>
        <name>substrate</name>
    </ligand>
</feature>
<feature type="binding site" evidence="1">
    <location>
        <position position="475"/>
    </location>
    <ligand>
        <name>Mn(2+)</name>
        <dbReference type="ChEBI" id="CHEBI:29035"/>
    </ligand>
</feature>
<feature type="binding site" evidence="1">
    <location>
        <position position="476"/>
    </location>
    <ligand>
        <name>Mn(2+)</name>
        <dbReference type="ChEBI" id="CHEBI:29035"/>
    </ligand>
</feature>
<feature type="site" description="Cleavage" evidence="1">
    <location>
        <begin position="217"/>
        <end position="218"/>
    </location>
</feature>
<evidence type="ECO:0000250" key="1"/>
<evidence type="ECO:0000255" key="2"/>
<evidence type="ECO:0000256" key="3">
    <source>
        <dbReference type="SAM" id="MobiDB-lite"/>
    </source>
</evidence>
<evidence type="ECO:0000305" key="4"/>